<sequence>MITGIQITKAANDDLLNSFWLLDSEKGEARCIVAKSGFAEDEVVAVSKLGEIEYREIPMEVKPEVRVEGGQHLNVNVLRRETLEDAVKHPEKYPQLTIRVSGYAVRFNSLTPEQQRDVIARTFTESL</sequence>
<gene>
    <name evidence="1" type="primary">grcA</name>
    <name type="ordered locus">STM2646</name>
</gene>
<reference key="1">
    <citation type="journal article" date="2001" name="Nature">
        <title>Complete genome sequence of Salmonella enterica serovar Typhimurium LT2.</title>
        <authorList>
            <person name="McClelland M."/>
            <person name="Sanderson K.E."/>
            <person name="Spieth J."/>
            <person name="Clifton S.W."/>
            <person name="Latreille P."/>
            <person name="Courtney L."/>
            <person name="Porwollik S."/>
            <person name="Ali J."/>
            <person name="Dante M."/>
            <person name="Du F."/>
            <person name="Hou S."/>
            <person name="Layman D."/>
            <person name="Leonard S."/>
            <person name="Nguyen C."/>
            <person name="Scott K."/>
            <person name="Holmes A."/>
            <person name="Grewal N."/>
            <person name="Mulvaney E."/>
            <person name="Ryan E."/>
            <person name="Sun H."/>
            <person name="Florea L."/>
            <person name="Miller W."/>
            <person name="Stoneking T."/>
            <person name="Nhan M."/>
            <person name="Waterston R."/>
            <person name="Wilson R.K."/>
        </authorList>
    </citation>
    <scope>NUCLEOTIDE SEQUENCE [LARGE SCALE GENOMIC DNA]</scope>
    <source>
        <strain>LT2 / SGSC1412 / ATCC 700720</strain>
    </source>
</reference>
<feature type="chain" id="PRO_0000166708" description="Autonomous glycyl radical cofactor">
    <location>
        <begin position="1"/>
        <end position="127"/>
    </location>
</feature>
<feature type="domain" description="Glycine radical" evidence="1">
    <location>
        <begin position="5"/>
        <end position="127"/>
    </location>
</feature>
<feature type="modified residue" description="Glycine radical" evidence="1">
    <location>
        <position position="102"/>
    </location>
</feature>
<dbReference type="EMBL" id="AE006468">
    <property type="protein sequence ID" value="AAL21540.1"/>
    <property type="molecule type" value="Genomic_DNA"/>
</dbReference>
<dbReference type="RefSeq" id="WP_000627811.1">
    <property type="nucleotide sequence ID" value="NC_003197.2"/>
</dbReference>
<dbReference type="SMR" id="Q7CQ05"/>
<dbReference type="STRING" id="99287.STM2646"/>
<dbReference type="PaxDb" id="99287-STM2646"/>
<dbReference type="GeneID" id="66757020"/>
<dbReference type="KEGG" id="stm:STM2646"/>
<dbReference type="PATRIC" id="fig|99287.12.peg.2796"/>
<dbReference type="HOGENOM" id="CLU_133780_0_0_6"/>
<dbReference type="OMA" id="QFEYREL"/>
<dbReference type="PhylomeDB" id="Q7CQ05"/>
<dbReference type="BioCyc" id="SENT99287:STM2646-MONOMER"/>
<dbReference type="Proteomes" id="UP000001014">
    <property type="component" value="Chromosome"/>
</dbReference>
<dbReference type="GO" id="GO:0003824">
    <property type="term" value="F:catalytic activity"/>
    <property type="evidence" value="ECO:0007669"/>
    <property type="project" value="InterPro"/>
</dbReference>
<dbReference type="FunFam" id="3.20.70.20:FF:000002">
    <property type="entry name" value="Autonomous glycyl radical cofactor"/>
    <property type="match status" value="1"/>
</dbReference>
<dbReference type="Gene3D" id="3.20.70.20">
    <property type="match status" value="1"/>
</dbReference>
<dbReference type="HAMAP" id="MF_00806">
    <property type="entry name" value="GrcA"/>
    <property type="match status" value="1"/>
</dbReference>
<dbReference type="InterPro" id="IPR050244">
    <property type="entry name" value="Auton_GlycylRad_Cofactor"/>
</dbReference>
<dbReference type="InterPro" id="IPR019777">
    <property type="entry name" value="Form_AcTrfase_GR_CS"/>
</dbReference>
<dbReference type="InterPro" id="IPR001150">
    <property type="entry name" value="Gly_radical"/>
</dbReference>
<dbReference type="InterPro" id="IPR011140">
    <property type="entry name" value="Glycyl_radical_cofactor_GrcA"/>
</dbReference>
<dbReference type="NCBIfam" id="TIGR04365">
    <property type="entry name" value="spare_glycyl"/>
    <property type="match status" value="1"/>
</dbReference>
<dbReference type="PANTHER" id="PTHR30191">
    <property type="entry name" value="FORMATE ACETYLTRANSFERASE"/>
    <property type="match status" value="1"/>
</dbReference>
<dbReference type="PANTHER" id="PTHR30191:SF0">
    <property type="entry name" value="FORMATE ACETYLTRANSFERASE 1"/>
    <property type="match status" value="1"/>
</dbReference>
<dbReference type="Pfam" id="PF01228">
    <property type="entry name" value="Gly_radical"/>
    <property type="match status" value="1"/>
</dbReference>
<dbReference type="PIRSF" id="PIRSF000378">
    <property type="entry name" value="Gly_radicl_yfiD"/>
    <property type="match status" value="1"/>
</dbReference>
<dbReference type="SUPFAM" id="SSF51998">
    <property type="entry name" value="PFL-like glycyl radical enzymes"/>
    <property type="match status" value="1"/>
</dbReference>
<dbReference type="PROSITE" id="PS00850">
    <property type="entry name" value="GLY_RADICAL_1"/>
    <property type="match status" value="1"/>
</dbReference>
<dbReference type="PROSITE" id="PS51149">
    <property type="entry name" value="GLY_RADICAL_2"/>
    <property type="match status" value="1"/>
</dbReference>
<organism>
    <name type="scientific">Salmonella typhimurium (strain LT2 / SGSC1412 / ATCC 700720)</name>
    <dbReference type="NCBI Taxonomy" id="99287"/>
    <lineage>
        <taxon>Bacteria</taxon>
        <taxon>Pseudomonadati</taxon>
        <taxon>Pseudomonadota</taxon>
        <taxon>Gammaproteobacteria</taxon>
        <taxon>Enterobacterales</taxon>
        <taxon>Enterobacteriaceae</taxon>
        <taxon>Salmonella</taxon>
    </lineage>
</organism>
<proteinExistence type="inferred from homology"/>
<name>GRCA_SALTY</name>
<protein>
    <recommendedName>
        <fullName evidence="1">Autonomous glycyl radical cofactor</fullName>
    </recommendedName>
</protein>
<accession>Q7CQ05</accession>
<comment type="function">
    <text evidence="1">Acts as a radical domain for damaged PFL and possibly other radical proteins.</text>
</comment>
<evidence type="ECO:0000255" key="1">
    <source>
        <dbReference type="HAMAP-Rule" id="MF_00806"/>
    </source>
</evidence>
<keyword id="KW-0556">Organic radical</keyword>
<keyword id="KW-1185">Reference proteome</keyword>